<comment type="subunit">
    <text evidence="2">Monomer. Trimer of homodimers. Oligomerizes in a concentration-dependent manner.</text>
</comment>
<comment type="allergen">
    <text evidence="1 2 3 4 5 6">Causes an allergic reaction in human. Common symptoms of mite allergy are bronchial asthma, allergic rhinitis and conjunctivitis. Binds to IgE in patients allergic to house dust mite (HDM) (PubMed:18445190, PubMed:20534590, PubMed:24874917, PubMed:2794865, PubMed:29319884, PubMed:7798547). Recombinant protein binds to IgE in 52% of the 25 patients tested (PubMed:7798547). Recombinant protein binds to IgE in 31% of the 117 patients tested living in urban area in Austria allergic to European HDM (PubMed:18445190). Recombinant protein binds to IgE in 69% of the 96 patients tested living in Bangkok allergic to European HDM (PubMed:24874917). Recombinant protein of 34-132 binds to IgE in 35% of the 62 patients tested (PubMed:20534590). In the skin tests, the recombinant protein produces positive reactions in 67% of the 15 patients tested with asthma and allergic rhinitis, in 58% of the 13 patients tested with asthma alone and in 29% of the 17 patients tested with allergic rhinitis alone (PubMed:7798547). No relevant cross-reactivity with Der p 21 allergen (PubMed:29319884). Causes histamine release from human peripheral blood mononuclear leukocytes. Up-regulates expression of CD203c activation marker on basophils (PubMed:18445190).</text>
</comment>
<comment type="biotechnology">
    <text evidence="14">Non-allergenic peptides identified from the mapped major conformational IgE epitope-containing areas could be used for the engineering of house dust mite allergy vaccine.</text>
</comment>
<comment type="similarity">
    <text evidence="13">Belongs to the mite group 5 allergen family.</text>
</comment>
<comment type="sequence caution" evidence="13">
    <conflict type="erroneous initiation">
        <sequence resource="EMBL-CDS" id="CAA35692"/>
    </conflict>
    <text>Extended N-terminus.</text>
</comment>
<evidence type="ECO:0000269" key="1">
    <source>
    </source>
</evidence>
<evidence type="ECO:0000269" key="2">
    <source>
    </source>
</evidence>
<evidence type="ECO:0000269" key="3">
    <source>
    </source>
</evidence>
<evidence type="ECO:0000269" key="4">
    <source>
    </source>
</evidence>
<evidence type="ECO:0000269" key="5">
    <source>
    </source>
</evidence>
<evidence type="ECO:0000269" key="6">
    <source>
    </source>
</evidence>
<evidence type="ECO:0000303" key="7">
    <source>
    </source>
</evidence>
<evidence type="ECO:0000303" key="8">
    <source>
    </source>
</evidence>
<evidence type="ECO:0000303" key="9">
    <source>
    </source>
</evidence>
<evidence type="ECO:0000303" key="10">
    <source>
    </source>
</evidence>
<evidence type="ECO:0000303" key="11">
    <source>
    </source>
</evidence>
<evidence type="ECO:0000303" key="12">
    <source>
    </source>
</evidence>
<evidence type="ECO:0000305" key="13"/>
<evidence type="ECO:0000305" key="14">
    <source>
    </source>
</evidence>
<evidence type="ECO:0007744" key="15">
    <source>
        <dbReference type="PDB" id="3MQ1"/>
    </source>
</evidence>
<evidence type="ECO:0007829" key="16">
    <source>
        <dbReference type="PDB" id="3MQ1"/>
    </source>
</evidence>
<name>ALL5_DERPT</name>
<dbReference type="EMBL" id="S76337">
    <property type="protein sequence ID" value="AAB32841.1"/>
    <property type="molecule type" value="mRNA"/>
</dbReference>
<dbReference type="EMBL" id="S76340">
    <property type="protein sequence ID" value="AAB32842.1"/>
    <property type="molecule type" value="mRNA"/>
</dbReference>
<dbReference type="EMBL" id="X17699">
    <property type="protein sequence ID" value="CAA35692.1"/>
    <property type="status" value="ALT_INIT"/>
    <property type="molecule type" value="mRNA"/>
</dbReference>
<dbReference type="PIR" id="S06734">
    <property type="entry name" value="S06734"/>
</dbReference>
<dbReference type="PDB" id="3MQ1">
    <property type="method" value="X-ray"/>
    <property type="resolution" value="2.80 A"/>
    <property type="chains" value="A/B/C/D/E/F=34-132"/>
</dbReference>
<dbReference type="PDBsum" id="3MQ1"/>
<dbReference type="SMR" id="P14004"/>
<dbReference type="Allergome" id="319">
    <property type="allergen name" value="Der p 5"/>
</dbReference>
<dbReference type="Allergome" id="3265">
    <property type="allergen name" value="Der p 5.0101"/>
</dbReference>
<dbReference type="Allergome" id="3266">
    <property type="allergen name" value="Der p 5.0102"/>
</dbReference>
<dbReference type="EnsemblMetazoa" id="XM_027343822.1">
    <property type="protein sequence ID" value="XP_027199623.1"/>
    <property type="gene ID" value="LOC113793750"/>
</dbReference>
<dbReference type="InParanoid" id="P14004"/>
<dbReference type="OrthoDB" id="6496220at2759"/>
<dbReference type="EvolutionaryTrace" id="P14004"/>
<dbReference type="Proteomes" id="UP000515146">
    <property type="component" value="Unplaced"/>
</dbReference>
<dbReference type="GO" id="GO:0042803">
    <property type="term" value="F:protein homodimerization activity"/>
    <property type="evidence" value="ECO:0000314"/>
    <property type="project" value="UniProtKB"/>
</dbReference>
<dbReference type="GO" id="GO:0051259">
    <property type="term" value="P:protein complex oligomerization"/>
    <property type="evidence" value="ECO:0000314"/>
    <property type="project" value="UniProtKB"/>
</dbReference>
<dbReference type="Gene3D" id="1.20.58.970">
    <property type="match status" value="1"/>
</dbReference>
<dbReference type="InterPro" id="IPR020306">
    <property type="entry name" value="Mite_allergen_group-5/21"/>
</dbReference>
<dbReference type="InterPro" id="IPR038455">
    <property type="entry name" value="Mite_allergen_group-5/21_sf"/>
</dbReference>
<dbReference type="Pfam" id="PF11642">
    <property type="entry name" value="Blo-t-5"/>
    <property type="match status" value="1"/>
</dbReference>
<organism>
    <name type="scientific">Dermatophagoides pteronyssinus</name>
    <name type="common">European house dust mite</name>
    <dbReference type="NCBI Taxonomy" id="6956"/>
    <lineage>
        <taxon>Eukaryota</taxon>
        <taxon>Metazoa</taxon>
        <taxon>Ecdysozoa</taxon>
        <taxon>Arthropoda</taxon>
        <taxon>Chelicerata</taxon>
        <taxon>Arachnida</taxon>
        <taxon>Acari</taxon>
        <taxon>Acariformes</taxon>
        <taxon>Sarcoptiformes</taxon>
        <taxon>Astigmata</taxon>
        <taxon>Psoroptidia</taxon>
        <taxon>Analgoidea</taxon>
        <taxon>Pyroglyphidae</taxon>
        <taxon>Dermatophagoidinae</taxon>
        <taxon>Dermatophagoides</taxon>
    </lineage>
</organism>
<protein>
    <recommendedName>
        <fullName evidence="13">Mite allergen Der p 5</fullName>
    </recommendedName>
    <alternativeName>
        <fullName evidence="12">Allergen Der p V</fullName>
    </alternativeName>
    <alternativeName>
        <fullName evidence="10">IgE-binding allergen</fullName>
    </alternativeName>
    <allergenName evidence="7 8 9 11">Der p 5</allergenName>
</protein>
<proteinExistence type="evidence at protein level"/>
<accession>P14004</accession>
<sequence length="132" mass="15615">MKFIIAFFVATLAVMTVSGEDKKHDYQNEFDFLLMERIHEQIKKGELALFYLQEQINHFEEKPTKEMKDKIVAEMDTIIAMIDGVRGVLDRLMQRKDLDIFEQYNLEMAKKSGDILERDLKKEEARVKKIEV</sequence>
<feature type="chain" id="PRO_0000151066" description="Mite allergen Der p 5">
    <location>
        <begin position="1"/>
        <end position="132"/>
    </location>
</feature>
<feature type="region of interest" description="Immunodominant conformational IgE-binding epitope" evidence="5">
    <location>
        <begin position="25"/>
        <end position="53"/>
    </location>
</feature>
<feature type="region of interest" description="Immunodominant conformational IgE-binding epitope" evidence="5">
    <location>
        <begin position="102"/>
        <end position="132"/>
    </location>
</feature>
<feature type="sequence variant">
    <original>E</original>
    <variation>A</variation>
    <location>
        <position position="61"/>
    </location>
</feature>
<feature type="helix" evidence="16">
    <location>
        <begin position="35"/>
        <end position="61"/>
    </location>
</feature>
<feature type="helix" evidence="16">
    <location>
        <begin position="65"/>
        <end position="93"/>
    </location>
</feature>
<feature type="helix" evidence="16">
    <location>
        <begin position="100"/>
        <end position="128"/>
    </location>
</feature>
<reference key="1">
    <citation type="journal article" date="1994" name="J. Allergy Clin. Immunol.">
        <title>Characterization of Der p V allergen, cDNA analysis, and IgE-mediated reactivity to the recombinant protein.</title>
        <authorList>
            <person name="Lin K.L."/>
            <person name="Hsieh K.H."/>
            <person name="Thomas W.R."/>
            <person name="Chiang B.L."/>
            <person name="Chua K.Y."/>
        </authorList>
    </citation>
    <scope>NUCLEOTIDE SEQUENCE [MRNA]</scope>
    <scope>ALLERGEN</scope>
</reference>
<reference key="2">
    <citation type="journal article" date="1989" name="J. Exp. Med.">
        <title>Cloning and sequencing of a cDNA expressing a recombinant house dust mite protein that binds human IgE and corresponds to an important low molecular weight allergen.</title>
        <authorList>
            <person name="Tovey E.R."/>
            <person name="Johnson M.C."/>
            <person name="Roche A.L."/>
            <person name="Cobon G.S."/>
            <person name="Baldo B.A."/>
        </authorList>
    </citation>
    <scope>NUCLEOTIDE SEQUENCE [MRNA]</scope>
    <scope>ALLERGEN</scope>
</reference>
<reference key="3">
    <citation type="submission" date="1990-02" db="EMBL/GenBank/DDBJ databases">
        <authorList>
            <person name="Cobon G.S."/>
        </authorList>
    </citation>
    <scope>SEQUENCE REVISION TO 132</scope>
</reference>
<reference key="4">
    <citation type="journal article" date="2008" name="Allergy">
        <title>Characterization of Der p 21, a new important allergen derived from the gut of house dust mites.</title>
        <authorList>
            <person name="Weghofer M."/>
            <person name="Dall'Antonia Y."/>
            <person name="Grote M."/>
            <person name="Stocklinger A."/>
            <person name="Kneidinger M."/>
            <person name="Balic N."/>
            <person name="Krauth M.T."/>
            <person name="Fernandez-Caldas E."/>
            <person name="Thomas W.R."/>
            <person name="van Hage M."/>
            <person name="Vieths S."/>
            <person name="Spitzauer S."/>
            <person name="Horak F."/>
            <person name="Svergun D.I."/>
            <person name="Konarev P.V."/>
            <person name="Valent P."/>
            <person name="Thalhamer J."/>
            <person name="Keller W."/>
            <person name="Valenta R."/>
            <person name="Vrtala S."/>
        </authorList>
    </citation>
    <scope>ALLERGEN</scope>
</reference>
<reference key="5">
    <citation type="journal article" date="2014" name="Protein Expr. Purif.">
        <title>Characterization of the house dust mite allergen Der p 21 produced in Pichia pastoris.</title>
        <authorList>
            <person name="Pulsawat P."/>
            <person name="Theeraapisakkun M."/>
            <person name="Nony E."/>
            <person name="Le Mignon M."/>
            <person name="Jain K."/>
            <person name="Buaklin A."/>
            <person name="Wongpiyabovorn J."/>
            <person name="Ruxrungtham K."/>
            <person name="Jacquet A."/>
        </authorList>
    </citation>
    <scope>ALLERGEN</scope>
</reference>
<reference key="6">
    <citation type="journal article" date="2018" name="Allergy">
        <title>Similar localization of conformational IgE epitopes on the house dust mite allergens Der p 5 and Der p 21 despite limited IgE cross-reactivity.</title>
        <authorList>
            <person name="Curin M."/>
            <person name="Garmatiuk T."/>
            <person name="Resch-Marat Y."/>
            <person name="Chen K.W."/>
            <person name="Hofer G."/>
            <person name="Fauland K."/>
            <person name="Keller W."/>
            <person name="Hemmer W."/>
            <person name="Vrtala S."/>
            <person name="Focke-Tejkl M."/>
            <person name="Valenta R."/>
        </authorList>
    </citation>
    <scope>ALLERGEN</scope>
    <scope>BIOTECHNOLOGY</scope>
    <scope>REGIONS</scope>
    <scope>3D-STRUCTURE MODELING</scope>
</reference>
<reference evidence="15" key="7">
    <citation type="journal article" date="2010" name="J. Biol. Chem.">
        <title>Der p 5 crystal structure provides insight into the group 5 dust mite allergens.</title>
        <authorList>
            <person name="Mueller G.A."/>
            <person name="Gosavi R.A."/>
            <person name="Krahn J.M."/>
            <person name="Edwards L.L."/>
            <person name="Cuneo M.J."/>
            <person name="Glesner J."/>
            <person name="Pomes A."/>
            <person name="Chapman M.D."/>
            <person name="London R.E."/>
            <person name="Pedersen L.C."/>
        </authorList>
    </citation>
    <scope>X-RAY CRYSTALLOGRAPHY (2.8 ANGSTROMS) OF 34-132</scope>
    <scope>SUBUNIT</scope>
    <scope>ALLERGEN</scope>
</reference>
<gene>
    <name type="primary">DERP5</name>
</gene>
<keyword id="KW-0002">3D-structure</keyword>
<keyword id="KW-0020">Allergen</keyword>
<keyword id="KW-1185">Reference proteome</keyword>